<evidence type="ECO:0000255" key="1">
    <source>
        <dbReference type="HAMAP-Rule" id="MF_01326"/>
    </source>
</evidence>
<evidence type="ECO:0000305" key="2"/>
<organism>
    <name type="scientific">Methanosarcina barkeri (strain Fusaro / DSM 804)</name>
    <dbReference type="NCBI Taxonomy" id="269797"/>
    <lineage>
        <taxon>Archaea</taxon>
        <taxon>Methanobacteriati</taxon>
        <taxon>Methanobacteriota</taxon>
        <taxon>Stenosarchaea group</taxon>
        <taxon>Methanomicrobia</taxon>
        <taxon>Methanosarcinales</taxon>
        <taxon>Methanosarcinaceae</taxon>
        <taxon>Methanosarcina</taxon>
    </lineage>
</organism>
<sequence length="116" mass="12807">MVSKQPRKQRKARYNAPLHVRQKFMGARLSEALSKEYGTRSAAVIAGDTVKVMRGDYKGTEGKVQAVSLQDGTISVDGVISTKVDGTEVPRPIYPSNVMITKLELKDERRASSIKK</sequence>
<protein>
    <recommendedName>
        <fullName evidence="1">Large ribosomal subunit protein uL24</fullName>
    </recommendedName>
    <alternativeName>
        <fullName evidence="2">50S ribosomal protein L24</fullName>
    </alternativeName>
</protein>
<gene>
    <name evidence="1" type="primary">rpl24</name>
    <name type="ordered locus">Mbar_A0099</name>
</gene>
<keyword id="KW-0687">Ribonucleoprotein</keyword>
<keyword id="KW-0689">Ribosomal protein</keyword>
<keyword id="KW-0694">RNA-binding</keyword>
<keyword id="KW-0699">rRNA-binding</keyword>
<comment type="function">
    <text evidence="1">One of two assembly initiator proteins, it binds directly to the 5'-end of the 23S rRNA, where it nucleates assembly of the 50S subunit.</text>
</comment>
<comment type="function">
    <text evidence="1">Located at the polypeptide exit tunnel on the outside of the subunit.</text>
</comment>
<comment type="subunit">
    <text evidence="1">Part of the 50S ribosomal subunit.</text>
</comment>
<comment type="similarity">
    <text evidence="1">Belongs to the universal ribosomal protein uL24 family.</text>
</comment>
<dbReference type="EMBL" id="CP000099">
    <property type="protein sequence ID" value="AAZ69086.1"/>
    <property type="molecule type" value="Genomic_DNA"/>
</dbReference>
<dbReference type="SMR" id="Q46GA6"/>
<dbReference type="STRING" id="269797.Mbar_A0099"/>
<dbReference type="PaxDb" id="269797-Mbar_A0099"/>
<dbReference type="KEGG" id="mba:Mbar_A0099"/>
<dbReference type="eggNOG" id="arCOG04094">
    <property type="taxonomic scope" value="Archaea"/>
</dbReference>
<dbReference type="HOGENOM" id="CLU_093240_2_1_2"/>
<dbReference type="OrthoDB" id="10899at2157"/>
<dbReference type="GO" id="GO:0015934">
    <property type="term" value="C:large ribosomal subunit"/>
    <property type="evidence" value="ECO:0007669"/>
    <property type="project" value="InterPro"/>
</dbReference>
<dbReference type="GO" id="GO:0019843">
    <property type="term" value="F:rRNA binding"/>
    <property type="evidence" value="ECO:0007669"/>
    <property type="project" value="UniProtKB-UniRule"/>
</dbReference>
<dbReference type="GO" id="GO:0003735">
    <property type="term" value="F:structural constituent of ribosome"/>
    <property type="evidence" value="ECO:0007669"/>
    <property type="project" value="InterPro"/>
</dbReference>
<dbReference type="GO" id="GO:0006412">
    <property type="term" value="P:translation"/>
    <property type="evidence" value="ECO:0007669"/>
    <property type="project" value="UniProtKB-UniRule"/>
</dbReference>
<dbReference type="CDD" id="cd06089">
    <property type="entry name" value="KOW_RPL26"/>
    <property type="match status" value="1"/>
</dbReference>
<dbReference type="FunFam" id="2.30.30.30:FF:000009">
    <property type="entry name" value="60S ribosomal protein L26"/>
    <property type="match status" value="1"/>
</dbReference>
<dbReference type="Gene3D" id="2.30.30.30">
    <property type="match status" value="1"/>
</dbReference>
<dbReference type="HAMAP" id="MF_01326_A">
    <property type="entry name" value="Ribosomal_uL24_A"/>
    <property type="match status" value="1"/>
</dbReference>
<dbReference type="InterPro" id="IPR005824">
    <property type="entry name" value="KOW"/>
</dbReference>
<dbReference type="InterPro" id="IPR014722">
    <property type="entry name" value="Rib_uL2_dom2"/>
</dbReference>
<dbReference type="InterPro" id="IPR005825">
    <property type="entry name" value="Ribosomal_uL24_CS"/>
</dbReference>
<dbReference type="InterPro" id="IPR005756">
    <property type="entry name" value="Ribosomal_uL24_euk/arc"/>
</dbReference>
<dbReference type="InterPro" id="IPR041988">
    <property type="entry name" value="Ribosomal_uL24_KOW"/>
</dbReference>
<dbReference type="InterPro" id="IPR008991">
    <property type="entry name" value="Translation_prot_SH3-like_sf"/>
</dbReference>
<dbReference type="NCBIfam" id="TIGR01080">
    <property type="entry name" value="rplX_A_E"/>
    <property type="match status" value="1"/>
</dbReference>
<dbReference type="PANTHER" id="PTHR11143">
    <property type="entry name" value="60S RIBOSOMAL PROTEIN L26 FAMILY MEMBER"/>
    <property type="match status" value="1"/>
</dbReference>
<dbReference type="Pfam" id="PF00467">
    <property type="entry name" value="KOW"/>
    <property type="match status" value="1"/>
</dbReference>
<dbReference type="Pfam" id="PF16906">
    <property type="entry name" value="Ribosomal_L26"/>
    <property type="match status" value="1"/>
</dbReference>
<dbReference type="SUPFAM" id="SSF50104">
    <property type="entry name" value="Translation proteins SH3-like domain"/>
    <property type="match status" value="1"/>
</dbReference>
<dbReference type="PROSITE" id="PS01108">
    <property type="entry name" value="RIBOSOMAL_L24"/>
    <property type="match status" value="1"/>
</dbReference>
<feature type="chain" id="PRO_0000241695" description="Large ribosomal subunit protein uL24">
    <location>
        <begin position="1"/>
        <end position="116"/>
    </location>
</feature>
<reference key="1">
    <citation type="journal article" date="2006" name="J. Bacteriol.">
        <title>The Methanosarcina barkeri genome: comparative analysis with Methanosarcina acetivorans and Methanosarcina mazei reveals extensive rearrangement within methanosarcinal genomes.</title>
        <authorList>
            <person name="Maeder D.L."/>
            <person name="Anderson I."/>
            <person name="Brettin T.S."/>
            <person name="Bruce D.C."/>
            <person name="Gilna P."/>
            <person name="Han C.S."/>
            <person name="Lapidus A."/>
            <person name="Metcalf W.W."/>
            <person name="Saunders E."/>
            <person name="Tapia R."/>
            <person name="Sowers K.R."/>
        </authorList>
    </citation>
    <scope>NUCLEOTIDE SEQUENCE [LARGE SCALE GENOMIC DNA]</scope>
    <source>
        <strain>Fusaro / DSM 804</strain>
    </source>
</reference>
<name>RL24_METBF</name>
<proteinExistence type="inferred from homology"/>
<accession>Q46GA6</accession>